<accession>A6LQG6</accession>
<gene>
    <name evidence="1" type="primary">upp</name>
    <name type="ordered locus">Cbei_0408</name>
</gene>
<keyword id="KW-0021">Allosteric enzyme</keyword>
<keyword id="KW-0328">Glycosyltransferase</keyword>
<keyword id="KW-0342">GTP-binding</keyword>
<keyword id="KW-0460">Magnesium</keyword>
<keyword id="KW-0547">Nucleotide-binding</keyword>
<keyword id="KW-0808">Transferase</keyword>
<dbReference type="EC" id="2.4.2.9" evidence="1"/>
<dbReference type="EMBL" id="CP000721">
    <property type="protein sequence ID" value="ABR32596.1"/>
    <property type="molecule type" value="Genomic_DNA"/>
</dbReference>
<dbReference type="RefSeq" id="WP_011967757.1">
    <property type="nucleotide sequence ID" value="NC_009617.1"/>
</dbReference>
<dbReference type="SMR" id="A6LQG6"/>
<dbReference type="GeneID" id="66343319"/>
<dbReference type="KEGG" id="cbe:Cbei_0408"/>
<dbReference type="eggNOG" id="COG0035">
    <property type="taxonomic scope" value="Bacteria"/>
</dbReference>
<dbReference type="HOGENOM" id="CLU_067096_2_2_9"/>
<dbReference type="UniPathway" id="UPA00574">
    <property type="reaction ID" value="UER00636"/>
</dbReference>
<dbReference type="Proteomes" id="UP000000565">
    <property type="component" value="Chromosome"/>
</dbReference>
<dbReference type="GO" id="GO:0005525">
    <property type="term" value="F:GTP binding"/>
    <property type="evidence" value="ECO:0007669"/>
    <property type="project" value="UniProtKB-KW"/>
</dbReference>
<dbReference type="GO" id="GO:0000287">
    <property type="term" value="F:magnesium ion binding"/>
    <property type="evidence" value="ECO:0007669"/>
    <property type="project" value="UniProtKB-UniRule"/>
</dbReference>
<dbReference type="GO" id="GO:0004845">
    <property type="term" value="F:uracil phosphoribosyltransferase activity"/>
    <property type="evidence" value="ECO:0007669"/>
    <property type="project" value="UniProtKB-UniRule"/>
</dbReference>
<dbReference type="GO" id="GO:0044206">
    <property type="term" value="P:UMP salvage"/>
    <property type="evidence" value="ECO:0007669"/>
    <property type="project" value="UniProtKB-UniRule"/>
</dbReference>
<dbReference type="GO" id="GO:0006223">
    <property type="term" value="P:uracil salvage"/>
    <property type="evidence" value="ECO:0007669"/>
    <property type="project" value="InterPro"/>
</dbReference>
<dbReference type="CDD" id="cd06223">
    <property type="entry name" value="PRTases_typeI"/>
    <property type="match status" value="1"/>
</dbReference>
<dbReference type="FunFam" id="3.40.50.2020:FF:000003">
    <property type="entry name" value="Uracil phosphoribosyltransferase"/>
    <property type="match status" value="1"/>
</dbReference>
<dbReference type="Gene3D" id="3.40.50.2020">
    <property type="match status" value="1"/>
</dbReference>
<dbReference type="HAMAP" id="MF_01218_B">
    <property type="entry name" value="Upp_B"/>
    <property type="match status" value="1"/>
</dbReference>
<dbReference type="InterPro" id="IPR000836">
    <property type="entry name" value="PRibTrfase_dom"/>
</dbReference>
<dbReference type="InterPro" id="IPR029057">
    <property type="entry name" value="PRTase-like"/>
</dbReference>
<dbReference type="InterPro" id="IPR034332">
    <property type="entry name" value="Upp_B"/>
</dbReference>
<dbReference type="InterPro" id="IPR050054">
    <property type="entry name" value="UPRTase/APRTase"/>
</dbReference>
<dbReference type="InterPro" id="IPR005765">
    <property type="entry name" value="Ura_phspho_trans"/>
</dbReference>
<dbReference type="NCBIfam" id="NF001097">
    <property type="entry name" value="PRK00129.1"/>
    <property type="match status" value="1"/>
</dbReference>
<dbReference type="NCBIfam" id="TIGR01091">
    <property type="entry name" value="upp"/>
    <property type="match status" value="1"/>
</dbReference>
<dbReference type="PANTHER" id="PTHR32315">
    <property type="entry name" value="ADENINE PHOSPHORIBOSYLTRANSFERASE"/>
    <property type="match status" value="1"/>
</dbReference>
<dbReference type="PANTHER" id="PTHR32315:SF4">
    <property type="entry name" value="URACIL PHOSPHORIBOSYLTRANSFERASE, CHLOROPLASTIC"/>
    <property type="match status" value="1"/>
</dbReference>
<dbReference type="Pfam" id="PF14681">
    <property type="entry name" value="UPRTase"/>
    <property type="match status" value="1"/>
</dbReference>
<dbReference type="SUPFAM" id="SSF53271">
    <property type="entry name" value="PRTase-like"/>
    <property type="match status" value="1"/>
</dbReference>
<comment type="function">
    <text evidence="1">Catalyzes the conversion of uracil and 5-phospho-alpha-D-ribose 1-diphosphate (PRPP) to UMP and diphosphate.</text>
</comment>
<comment type="catalytic activity">
    <reaction evidence="1">
        <text>UMP + diphosphate = 5-phospho-alpha-D-ribose 1-diphosphate + uracil</text>
        <dbReference type="Rhea" id="RHEA:13017"/>
        <dbReference type="ChEBI" id="CHEBI:17568"/>
        <dbReference type="ChEBI" id="CHEBI:33019"/>
        <dbReference type="ChEBI" id="CHEBI:57865"/>
        <dbReference type="ChEBI" id="CHEBI:58017"/>
        <dbReference type="EC" id="2.4.2.9"/>
    </reaction>
</comment>
<comment type="cofactor">
    <cofactor evidence="1">
        <name>Mg(2+)</name>
        <dbReference type="ChEBI" id="CHEBI:18420"/>
    </cofactor>
    <text evidence="1">Binds 1 Mg(2+) ion per subunit. The magnesium is bound as Mg-PRPP.</text>
</comment>
<comment type="activity regulation">
    <text evidence="1">Allosterically activated by GTP.</text>
</comment>
<comment type="pathway">
    <text evidence="1">Pyrimidine metabolism; UMP biosynthesis via salvage pathway; UMP from uracil: step 1/1.</text>
</comment>
<comment type="similarity">
    <text evidence="1">Belongs to the UPRTase family.</text>
</comment>
<feature type="chain" id="PRO_1000085624" description="Uracil phosphoribosyltransferase">
    <location>
        <begin position="1"/>
        <end position="209"/>
    </location>
</feature>
<feature type="binding site" evidence="1">
    <location>
        <position position="79"/>
    </location>
    <ligand>
        <name>5-phospho-alpha-D-ribose 1-diphosphate</name>
        <dbReference type="ChEBI" id="CHEBI:58017"/>
    </ligand>
</feature>
<feature type="binding site" evidence="1">
    <location>
        <position position="104"/>
    </location>
    <ligand>
        <name>5-phospho-alpha-D-ribose 1-diphosphate</name>
        <dbReference type="ChEBI" id="CHEBI:58017"/>
    </ligand>
</feature>
<feature type="binding site" evidence="1">
    <location>
        <begin position="131"/>
        <end position="139"/>
    </location>
    <ligand>
        <name>5-phospho-alpha-D-ribose 1-diphosphate</name>
        <dbReference type="ChEBI" id="CHEBI:58017"/>
    </ligand>
</feature>
<feature type="binding site" evidence="1">
    <location>
        <position position="194"/>
    </location>
    <ligand>
        <name>uracil</name>
        <dbReference type="ChEBI" id="CHEBI:17568"/>
    </ligand>
</feature>
<feature type="binding site" evidence="1">
    <location>
        <begin position="199"/>
        <end position="201"/>
    </location>
    <ligand>
        <name>uracil</name>
        <dbReference type="ChEBI" id="CHEBI:17568"/>
    </ligand>
</feature>
<feature type="binding site" evidence="1">
    <location>
        <position position="200"/>
    </location>
    <ligand>
        <name>5-phospho-alpha-D-ribose 1-diphosphate</name>
        <dbReference type="ChEBI" id="CHEBI:58017"/>
    </ligand>
</feature>
<name>UPP_CLOB8</name>
<proteinExistence type="inferred from homology"/>
<sequence>MSKVIEINHPLILHKLAILRDEKTGSKDFRKLVEEISMLMAYEVTRDLNTEEVEVKTPVAVTKCKMLSGKKMAVVPILRAGLGMVDGVLNLIPAAKVGHIGLYRDEKTLQPVEYFCKMPQDIAERDIIVVDPMLATGGSAIDALTMLKNRGAKNLKLMCLVGAPEGIEAIKKAHDDVDIYLASIDEKLNEHGYIVPGLGDAGDRLFGTK</sequence>
<evidence type="ECO:0000255" key="1">
    <source>
        <dbReference type="HAMAP-Rule" id="MF_01218"/>
    </source>
</evidence>
<protein>
    <recommendedName>
        <fullName evidence="1">Uracil phosphoribosyltransferase</fullName>
        <ecNumber evidence="1">2.4.2.9</ecNumber>
    </recommendedName>
    <alternativeName>
        <fullName evidence="1">UMP pyrophosphorylase</fullName>
    </alternativeName>
    <alternativeName>
        <fullName evidence="1">UPRTase</fullName>
    </alternativeName>
</protein>
<organism>
    <name type="scientific">Clostridium beijerinckii (strain ATCC 51743 / NCIMB 8052)</name>
    <name type="common">Clostridium acetobutylicum</name>
    <dbReference type="NCBI Taxonomy" id="290402"/>
    <lineage>
        <taxon>Bacteria</taxon>
        <taxon>Bacillati</taxon>
        <taxon>Bacillota</taxon>
        <taxon>Clostridia</taxon>
        <taxon>Eubacteriales</taxon>
        <taxon>Clostridiaceae</taxon>
        <taxon>Clostridium</taxon>
    </lineage>
</organism>
<reference key="1">
    <citation type="submission" date="2007-06" db="EMBL/GenBank/DDBJ databases">
        <title>Complete sequence of Clostridium beijerinckii NCIMB 8052.</title>
        <authorList>
            <consortium name="US DOE Joint Genome Institute"/>
            <person name="Copeland A."/>
            <person name="Lucas S."/>
            <person name="Lapidus A."/>
            <person name="Barry K."/>
            <person name="Detter J.C."/>
            <person name="Glavina del Rio T."/>
            <person name="Hammon N."/>
            <person name="Israni S."/>
            <person name="Dalin E."/>
            <person name="Tice H."/>
            <person name="Pitluck S."/>
            <person name="Sims D."/>
            <person name="Brettin T."/>
            <person name="Bruce D."/>
            <person name="Tapia R."/>
            <person name="Brainard J."/>
            <person name="Schmutz J."/>
            <person name="Larimer F."/>
            <person name="Land M."/>
            <person name="Hauser L."/>
            <person name="Kyrpides N."/>
            <person name="Mikhailova N."/>
            <person name="Bennet G."/>
            <person name="Cann I."/>
            <person name="Chen J.-S."/>
            <person name="Contreras A.L."/>
            <person name="Jones D."/>
            <person name="Kashket E."/>
            <person name="Mitchell W."/>
            <person name="Stoddard S."/>
            <person name="Schwarz W."/>
            <person name="Qureshi N."/>
            <person name="Young M."/>
            <person name="Shi Z."/>
            <person name="Ezeji T."/>
            <person name="White B."/>
            <person name="Blaschek H."/>
            <person name="Richardson P."/>
        </authorList>
    </citation>
    <scope>NUCLEOTIDE SEQUENCE [LARGE SCALE GENOMIC DNA]</scope>
    <source>
        <strain>ATCC 51743 / NCIMB 8052</strain>
    </source>
</reference>